<feature type="chain" id="PRO_0000183386" description="Cytochrome c oxidase subunit 1">
    <location>
        <begin position="1"/>
        <end position="514"/>
    </location>
</feature>
<feature type="topological domain" description="Mitochondrial matrix" evidence="2">
    <location>
        <begin position="1"/>
        <end position="11"/>
    </location>
</feature>
<feature type="transmembrane region" description="Helical; Name=I" evidence="2">
    <location>
        <begin position="12"/>
        <end position="40"/>
    </location>
</feature>
<feature type="topological domain" description="Mitochondrial intermembrane" evidence="2">
    <location>
        <begin position="41"/>
        <end position="50"/>
    </location>
</feature>
<feature type="transmembrane region" description="Helical; Name=II" evidence="2">
    <location>
        <begin position="51"/>
        <end position="86"/>
    </location>
</feature>
<feature type="topological domain" description="Mitochondrial matrix" evidence="2">
    <location>
        <begin position="87"/>
        <end position="94"/>
    </location>
</feature>
<feature type="transmembrane region" description="Helical; Name=III" evidence="2">
    <location>
        <begin position="95"/>
        <end position="117"/>
    </location>
</feature>
<feature type="topological domain" description="Mitochondrial intermembrane" evidence="2">
    <location>
        <begin position="118"/>
        <end position="140"/>
    </location>
</feature>
<feature type="transmembrane region" description="Helical; Name=IV" evidence="2">
    <location>
        <begin position="141"/>
        <end position="170"/>
    </location>
</feature>
<feature type="topological domain" description="Mitochondrial matrix" evidence="2">
    <location>
        <begin position="171"/>
        <end position="182"/>
    </location>
</feature>
<feature type="transmembrane region" description="Helical; Name=V" evidence="2">
    <location>
        <begin position="183"/>
        <end position="212"/>
    </location>
</feature>
<feature type="topological domain" description="Mitochondrial intermembrane" evidence="2">
    <location>
        <begin position="213"/>
        <end position="227"/>
    </location>
</feature>
<feature type="transmembrane region" description="Helical; Name=VI" evidence="2">
    <location>
        <begin position="228"/>
        <end position="261"/>
    </location>
</feature>
<feature type="topological domain" description="Mitochondrial matrix" evidence="2">
    <location>
        <begin position="262"/>
        <end position="269"/>
    </location>
</feature>
<feature type="transmembrane region" description="Helical; Name=VII" evidence="2">
    <location>
        <begin position="270"/>
        <end position="286"/>
    </location>
</feature>
<feature type="topological domain" description="Mitochondrial intermembrane" evidence="2">
    <location>
        <begin position="287"/>
        <end position="298"/>
    </location>
</feature>
<feature type="transmembrane region" description="Helical; Name=VIII" evidence="2">
    <location>
        <begin position="299"/>
        <end position="327"/>
    </location>
</feature>
<feature type="topological domain" description="Mitochondrial matrix" evidence="2">
    <location>
        <begin position="328"/>
        <end position="335"/>
    </location>
</feature>
<feature type="transmembrane region" description="Helical; Name=IX" evidence="2">
    <location>
        <begin position="336"/>
        <end position="357"/>
    </location>
</feature>
<feature type="topological domain" description="Mitochondrial intermembrane" evidence="2">
    <location>
        <begin position="358"/>
        <end position="370"/>
    </location>
</feature>
<feature type="transmembrane region" description="Helical; Name=X" evidence="2">
    <location>
        <begin position="371"/>
        <end position="400"/>
    </location>
</feature>
<feature type="topological domain" description="Mitochondrial matrix" evidence="2">
    <location>
        <begin position="401"/>
        <end position="406"/>
    </location>
</feature>
<feature type="transmembrane region" description="Helical; Name=XI" evidence="2">
    <location>
        <begin position="407"/>
        <end position="433"/>
    </location>
</feature>
<feature type="topological domain" description="Mitochondrial intermembrane" evidence="2">
    <location>
        <begin position="434"/>
        <end position="446"/>
    </location>
</feature>
<feature type="transmembrane region" description="Helical; Name=XII" evidence="2">
    <location>
        <begin position="447"/>
        <end position="478"/>
    </location>
</feature>
<feature type="topological domain" description="Mitochondrial matrix" evidence="2">
    <location>
        <begin position="479"/>
        <end position="514"/>
    </location>
</feature>
<feature type="binding site" evidence="2">
    <location>
        <position position="40"/>
    </location>
    <ligand>
        <name>Na(+)</name>
        <dbReference type="ChEBI" id="CHEBI:29101"/>
    </ligand>
</feature>
<feature type="binding site" evidence="2">
    <location>
        <position position="45"/>
    </location>
    <ligand>
        <name>Na(+)</name>
        <dbReference type="ChEBI" id="CHEBI:29101"/>
    </ligand>
</feature>
<feature type="binding site" description="axial binding residue" evidence="2">
    <location>
        <position position="61"/>
    </location>
    <ligand>
        <name>Fe(II)-heme a</name>
        <dbReference type="ChEBI" id="CHEBI:61715"/>
        <note>low-spin</note>
    </ligand>
    <ligandPart>
        <name>Fe</name>
        <dbReference type="ChEBI" id="CHEBI:18248"/>
    </ligandPart>
</feature>
<feature type="binding site" evidence="2">
    <location>
        <position position="240"/>
    </location>
    <ligand>
        <name>Cu cation</name>
        <dbReference type="ChEBI" id="CHEBI:23378"/>
        <label>B</label>
    </ligand>
</feature>
<feature type="binding site" evidence="2">
    <location>
        <position position="244"/>
    </location>
    <ligand>
        <name>O2</name>
        <dbReference type="ChEBI" id="CHEBI:15379"/>
    </ligand>
</feature>
<feature type="binding site" evidence="2">
    <location>
        <position position="290"/>
    </location>
    <ligand>
        <name>Cu cation</name>
        <dbReference type="ChEBI" id="CHEBI:23378"/>
        <label>B</label>
    </ligand>
</feature>
<feature type="binding site" evidence="2">
    <location>
        <position position="291"/>
    </location>
    <ligand>
        <name>Cu cation</name>
        <dbReference type="ChEBI" id="CHEBI:23378"/>
        <label>B</label>
    </ligand>
</feature>
<feature type="binding site" evidence="2">
    <location>
        <position position="368"/>
    </location>
    <ligand>
        <name>Mg(2+)</name>
        <dbReference type="ChEBI" id="CHEBI:18420"/>
        <note>ligand shared with MT-CO2</note>
    </ligand>
</feature>
<feature type="binding site" evidence="2">
    <location>
        <position position="369"/>
    </location>
    <ligand>
        <name>Mg(2+)</name>
        <dbReference type="ChEBI" id="CHEBI:18420"/>
        <note>ligand shared with MT-CO2</note>
    </ligand>
</feature>
<feature type="binding site" description="axial binding residue" evidence="2">
    <location>
        <position position="376"/>
    </location>
    <ligand>
        <name>heme a3</name>
        <dbReference type="ChEBI" id="CHEBI:83282"/>
        <note>high-spin</note>
    </ligand>
    <ligandPart>
        <name>Fe</name>
        <dbReference type="ChEBI" id="CHEBI:18248"/>
    </ligandPart>
</feature>
<feature type="binding site" description="axial binding residue" evidence="2">
    <location>
        <position position="378"/>
    </location>
    <ligand>
        <name>Fe(II)-heme a</name>
        <dbReference type="ChEBI" id="CHEBI:61715"/>
        <note>low-spin</note>
    </ligand>
    <ligandPart>
        <name>Fe</name>
        <dbReference type="ChEBI" id="CHEBI:18248"/>
    </ligandPart>
</feature>
<feature type="binding site" evidence="2">
    <location>
        <position position="441"/>
    </location>
    <ligand>
        <name>Na(+)</name>
        <dbReference type="ChEBI" id="CHEBI:29101"/>
    </ligand>
</feature>
<feature type="cross-link" description="1'-histidyl-3'-tyrosine (His-Tyr)" evidence="2">
    <location>
        <begin position="240"/>
        <end position="244"/>
    </location>
</feature>
<protein>
    <recommendedName>
        <fullName>Cytochrome c oxidase subunit 1</fullName>
        <ecNumber>7.1.1.9</ecNumber>
    </recommendedName>
    <alternativeName>
        <fullName>Cytochrome c oxidase polypeptide I</fullName>
    </alternativeName>
</protein>
<organism>
    <name type="scientific">Pelomedusa subrufa</name>
    <name type="common">African side-necked turtle</name>
    <dbReference type="NCBI Taxonomy" id="44522"/>
    <lineage>
        <taxon>Eukaryota</taxon>
        <taxon>Metazoa</taxon>
        <taxon>Chordata</taxon>
        <taxon>Craniata</taxon>
        <taxon>Vertebrata</taxon>
        <taxon>Euteleostomi</taxon>
        <taxon>Archelosauria</taxon>
        <taxon>Testudinata</taxon>
        <taxon>Testudines</taxon>
        <taxon>Pleurodira</taxon>
        <taxon>Pelomedusidae</taxon>
        <taxon>Pelomedusa</taxon>
    </lineage>
</organism>
<evidence type="ECO:0000250" key="1">
    <source>
        <dbReference type="UniProtKB" id="P00395"/>
    </source>
</evidence>
<evidence type="ECO:0000250" key="2">
    <source>
        <dbReference type="UniProtKB" id="P00396"/>
    </source>
</evidence>
<evidence type="ECO:0000250" key="3">
    <source>
        <dbReference type="UniProtKB" id="P00401"/>
    </source>
</evidence>
<evidence type="ECO:0000305" key="4"/>
<sequence length="514" mass="56977">MNLNRWLFSTNHKDIGTLYLIFGAWAGMIGTALSLLIRTELNQPGNLLGSDQTYNVIVTAHAFVMIFFMVMPVMIGGFGNWLVPLMIGAPDMAFPRLNNMSFWLLPPSLLLMLASSAIEAGAGTGWTVYPPLASNLAHAGASVDLAIFSLHLAGASSILGAINFITTVINMKTPNMSFLDMPLFVWSVLITAILLLLSLPVLAAGITMLLTDRNLNTTFFDPSGGGDPILYQHLFWFFGHPEVYILILPGFGIISHIVAYYSTKKEPFGYIGMVWAMTSIGFLGFIVWAHHMFTVGMNVNTRAYFTSATMIIAIPTGVKVFNWLATIHGGLIKWEAPMLWAFGFIFLFTVGGLTGIVLANSSLDIVLHDTYYVVAHFHYVLSMGAVFAIMAGFTHWFTLFTGYPLHSTWTKIHFTTMFIGVNLTFFPQHFLGLAGMPRRYSDYPDAYTLWNSISSMGSMISLTAVVMMTFIIWEAMSSKRSTTTTEQMSTNVEWTYLCPPPNHTHVEATHLIRP</sequence>
<comment type="function">
    <text evidence="3">Component of the cytochrome c oxidase, the last enzyme in the mitochondrial electron transport chain which drives oxidative phosphorylation. The respiratory chain contains 3 multisubunit complexes succinate dehydrogenase (complex II, CII), ubiquinol-cytochrome c oxidoreductase (cytochrome b-c1 complex, complex III, CIII) and cytochrome c oxidase (complex IV, CIV), that cooperate to transfer electrons derived from NADH and succinate to molecular oxygen, creating an electrochemical gradient over the inner membrane that drives transmembrane transport and the ATP synthase. Cytochrome c oxidase is the component of the respiratory chain that catalyzes the reduction of oxygen to water. Electrons originating from reduced cytochrome c in the intermembrane space (IMS) are transferred via the dinuclear copper A center (CU(A)) of subunit 2 and heme A of subunit 1 to the active site in subunit 1, a binuclear center (BNC) formed by heme A3 and copper B (CU(B)). The BNC reduces molecular oxygen to 2 water molecules using 4 electrons from cytochrome c in the IMS and 4 protons from the mitochondrial matrix.</text>
</comment>
<comment type="catalytic activity">
    <reaction evidence="3">
        <text>4 Fe(II)-[cytochrome c] + O2 + 8 H(+)(in) = 4 Fe(III)-[cytochrome c] + 2 H2O + 4 H(+)(out)</text>
        <dbReference type="Rhea" id="RHEA:11436"/>
        <dbReference type="Rhea" id="RHEA-COMP:10350"/>
        <dbReference type="Rhea" id="RHEA-COMP:14399"/>
        <dbReference type="ChEBI" id="CHEBI:15377"/>
        <dbReference type="ChEBI" id="CHEBI:15378"/>
        <dbReference type="ChEBI" id="CHEBI:15379"/>
        <dbReference type="ChEBI" id="CHEBI:29033"/>
        <dbReference type="ChEBI" id="CHEBI:29034"/>
        <dbReference type="EC" id="7.1.1.9"/>
    </reaction>
    <physiologicalReaction direction="left-to-right" evidence="3">
        <dbReference type="Rhea" id="RHEA:11437"/>
    </physiologicalReaction>
</comment>
<comment type="cofactor">
    <cofactor evidence="2">
        <name>heme</name>
        <dbReference type="ChEBI" id="CHEBI:30413"/>
    </cofactor>
    <text evidence="2">Binds 2 heme A groups non-covalently per subunit.</text>
</comment>
<comment type="cofactor">
    <cofactor evidence="2">
        <name>Cu cation</name>
        <dbReference type="ChEBI" id="CHEBI:23378"/>
    </cofactor>
    <text evidence="2">Binds a copper B center.</text>
</comment>
<comment type="pathway">
    <text evidence="3">Energy metabolism; oxidative phosphorylation.</text>
</comment>
<comment type="subunit">
    <text evidence="1 2">Component of the cytochrome c oxidase (complex IV, CIV), a multisubunit enzyme composed of 14 subunits. The complex is composed of a catalytic core of 3 subunits MT-CO1, MT-CO2 and MT-CO3, encoded in the mitochondrial DNA, and 11 supernumerary subunits COX4I, COX5A, COX5B, COX6A, COX6B, COX6C, COX7A, COX7B, COX7C, COX8 and NDUFA4, which are encoded in the nuclear genome. The complex exists as a monomer or a dimer and forms supercomplexes (SCs) in the inner mitochondrial membrane with NADH-ubiquinone oxidoreductase (complex I, CI) and ubiquinol-cytochrome c oxidoreductase (cytochrome b-c1 complex, complex III, CIII), resulting in different assemblies (supercomplex SCI(1)III(2)IV(1) and megacomplex MCI(2)III(2)IV(2)) (By similarity). As a newly synthesized protein, rapidly incorporates into a multi-subunit assembly intermediate in the inner membrane, called MITRAC (mitochondrial translation regulation assembly intermediate of cytochrome c oxidase) complex, whose core components are COA3/MITRAC12 and COX14. Within the MITRAC complex, interacts with COA3 and with SMIM20/MITRAC7; the interaction with SMIM20 stabilizes the newly synthesized MT-CO1 and prevents its premature turnover. Interacts with TMEM177 in a COX20-dependent manner (By similarity).</text>
</comment>
<comment type="subcellular location">
    <subcellularLocation>
        <location evidence="2">Mitochondrion inner membrane</location>
        <topology evidence="2">Multi-pass membrane protein</topology>
    </subcellularLocation>
</comment>
<comment type="similarity">
    <text evidence="4">Belongs to the heme-copper respiratory oxidase family.</text>
</comment>
<geneLocation type="mitochondrion"/>
<keyword id="KW-0106">Calcium</keyword>
<keyword id="KW-0186">Copper</keyword>
<keyword id="KW-0249">Electron transport</keyword>
<keyword id="KW-0349">Heme</keyword>
<keyword id="KW-0408">Iron</keyword>
<keyword id="KW-0460">Magnesium</keyword>
<keyword id="KW-0472">Membrane</keyword>
<keyword id="KW-0479">Metal-binding</keyword>
<keyword id="KW-0496">Mitochondrion</keyword>
<keyword id="KW-0999">Mitochondrion inner membrane</keyword>
<keyword id="KW-0679">Respiratory chain</keyword>
<keyword id="KW-0915">Sodium</keyword>
<keyword id="KW-1278">Translocase</keyword>
<keyword id="KW-0812">Transmembrane</keyword>
<keyword id="KW-1133">Transmembrane helix</keyword>
<keyword id="KW-0813">Transport</keyword>
<dbReference type="EC" id="7.1.1.9"/>
<dbReference type="EMBL" id="AF039066">
    <property type="protein sequence ID" value="AAD05052.1"/>
    <property type="molecule type" value="Genomic_DNA"/>
</dbReference>
<dbReference type="PIR" id="T11103">
    <property type="entry name" value="T11103"/>
</dbReference>
<dbReference type="RefSeq" id="NP_008434.1">
    <property type="nucleotide sequence ID" value="NC_001947.1"/>
</dbReference>
<dbReference type="SMR" id="O79672"/>
<dbReference type="GeneID" id="808277"/>
<dbReference type="CTD" id="4512"/>
<dbReference type="UniPathway" id="UPA00705"/>
<dbReference type="GO" id="GO:0005743">
    <property type="term" value="C:mitochondrial inner membrane"/>
    <property type="evidence" value="ECO:0007669"/>
    <property type="project" value="UniProtKB-SubCell"/>
</dbReference>
<dbReference type="GO" id="GO:0045277">
    <property type="term" value="C:respiratory chain complex IV"/>
    <property type="evidence" value="ECO:0000250"/>
    <property type="project" value="UniProtKB"/>
</dbReference>
<dbReference type="GO" id="GO:0004129">
    <property type="term" value="F:cytochrome-c oxidase activity"/>
    <property type="evidence" value="ECO:0007669"/>
    <property type="project" value="UniProtKB-EC"/>
</dbReference>
<dbReference type="GO" id="GO:0020037">
    <property type="term" value="F:heme binding"/>
    <property type="evidence" value="ECO:0007669"/>
    <property type="project" value="InterPro"/>
</dbReference>
<dbReference type="GO" id="GO:0046872">
    <property type="term" value="F:metal ion binding"/>
    <property type="evidence" value="ECO:0007669"/>
    <property type="project" value="UniProtKB-KW"/>
</dbReference>
<dbReference type="GO" id="GO:0015990">
    <property type="term" value="P:electron transport coupled proton transport"/>
    <property type="evidence" value="ECO:0007669"/>
    <property type="project" value="TreeGrafter"/>
</dbReference>
<dbReference type="GO" id="GO:0006123">
    <property type="term" value="P:mitochondrial electron transport, cytochrome c to oxygen"/>
    <property type="evidence" value="ECO:0007669"/>
    <property type="project" value="TreeGrafter"/>
</dbReference>
<dbReference type="CDD" id="cd01663">
    <property type="entry name" value="Cyt_c_Oxidase_I"/>
    <property type="match status" value="1"/>
</dbReference>
<dbReference type="FunFam" id="1.20.210.10:FF:000001">
    <property type="entry name" value="Cytochrome c oxidase subunit 1"/>
    <property type="match status" value="1"/>
</dbReference>
<dbReference type="Gene3D" id="1.20.210.10">
    <property type="entry name" value="Cytochrome c oxidase-like, subunit I domain"/>
    <property type="match status" value="1"/>
</dbReference>
<dbReference type="InterPro" id="IPR023616">
    <property type="entry name" value="Cyt_c_oxase-like_su1_dom"/>
</dbReference>
<dbReference type="InterPro" id="IPR036927">
    <property type="entry name" value="Cyt_c_oxase-like_su1_sf"/>
</dbReference>
<dbReference type="InterPro" id="IPR000883">
    <property type="entry name" value="Cyt_C_Oxase_1"/>
</dbReference>
<dbReference type="InterPro" id="IPR023615">
    <property type="entry name" value="Cyt_c_Oxase_su1_BS"/>
</dbReference>
<dbReference type="InterPro" id="IPR033944">
    <property type="entry name" value="Cyt_c_oxase_su1_dom"/>
</dbReference>
<dbReference type="PANTHER" id="PTHR10422">
    <property type="entry name" value="CYTOCHROME C OXIDASE SUBUNIT 1"/>
    <property type="match status" value="1"/>
</dbReference>
<dbReference type="PANTHER" id="PTHR10422:SF18">
    <property type="entry name" value="CYTOCHROME C OXIDASE SUBUNIT 1"/>
    <property type="match status" value="1"/>
</dbReference>
<dbReference type="Pfam" id="PF00115">
    <property type="entry name" value="COX1"/>
    <property type="match status" value="1"/>
</dbReference>
<dbReference type="PRINTS" id="PR01165">
    <property type="entry name" value="CYCOXIDASEI"/>
</dbReference>
<dbReference type="SUPFAM" id="SSF81442">
    <property type="entry name" value="Cytochrome c oxidase subunit I-like"/>
    <property type="match status" value="1"/>
</dbReference>
<dbReference type="PROSITE" id="PS50855">
    <property type="entry name" value="COX1"/>
    <property type="match status" value="1"/>
</dbReference>
<dbReference type="PROSITE" id="PS00077">
    <property type="entry name" value="COX1_CUB"/>
    <property type="match status" value="1"/>
</dbReference>
<name>COX1_PELSU</name>
<gene>
    <name type="primary">MT-CO1</name>
    <name type="synonym">COI</name>
    <name type="synonym">COXI</name>
    <name type="synonym">MTCO1</name>
</gene>
<proteinExistence type="inferred from homology"/>
<reference key="1">
    <citation type="journal article" date="1998" name="Proc. Natl. Acad. Sci. U.S.A.">
        <title>Complete mitochondrial genome suggests diapsid affinities of turtles.</title>
        <authorList>
            <person name="Zardoya R."/>
            <person name="Meyer A."/>
        </authorList>
    </citation>
    <scope>NUCLEOTIDE SEQUENCE [GENOMIC DNA]</scope>
</reference>
<accession>O79672</accession>